<comment type="function">
    <text evidence="1">Endonuclease that specifically degrades the RNA of RNA-DNA hybrids.</text>
</comment>
<comment type="catalytic activity">
    <reaction evidence="1">
        <text>Endonucleolytic cleavage to 5'-phosphomonoester.</text>
        <dbReference type="EC" id="3.1.26.4"/>
    </reaction>
</comment>
<comment type="cofactor">
    <cofactor evidence="1">
        <name>Mg(2+)</name>
        <dbReference type="ChEBI" id="CHEBI:18420"/>
    </cofactor>
    <text evidence="1">Binds 1 Mg(2+) ion per subunit. May bind a second metal ion at a regulatory site, or after substrate binding.</text>
</comment>
<comment type="subunit">
    <text evidence="1">Monomer.</text>
</comment>
<comment type="subcellular location">
    <subcellularLocation>
        <location evidence="1">Cytoplasm</location>
    </subcellularLocation>
</comment>
<comment type="similarity">
    <text evidence="1">Belongs to the RNase H family.</text>
</comment>
<reference key="1">
    <citation type="journal article" date="2005" name="Nucleic Acids Res.">
        <title>Genome dynamics and diversity of Shigella species, the etiologic agents of bacillary dysentery.</title>
        <authorList>
            <person name="Yang F."/>
            <person name="Yang J."/>
            <person name="Zhang X."/>
            <person name="Chen L."/>
            <person name="Jiang Y."/>
            <person name="Yan Y."/>
            <person name="Tang X."/>
            <person name="Wang J."/>
            <person name="Xiong Z."/>
            <person name="Dong J."/>
            <person name="Xue Y."/>
            <person name="Zhu Y."/>
            <person name="Xu X."/>
            <person name="Sun L."/>
            <person name="Chen S."/>
            <person name="Nie H."/>
            <person name="Peng J."/>
            <person name="Xu J."/>
            <person name="Wang Y."/>
            <person name="Yuan Z."/>
            <person name="Wen Y."/>
            <person name="Yao Z."/>
            <person name="Shen Y."/>
            <person name="Qiang B."/>
            <person name="Hou Y."/>
            <person name="Yu J."/>
            <person name="Jin Q."/>
        </authorList>
    </citation>
    <scope>NUCLEOTIDE SEQUENCE [LARGE SCALE GENOMIC DNA]</scope>
    <source>
        <strain>Ss046</strain>
    </source>
</reference>
<sequence>MLKQVEIFTDGSCLGNPGPGGYGAILRYRGREKTFSAGYTRTTNNRMELMAAIVALEALKEHCEVILSTDSQYVRQGITQWIHNWKKRGWKTADKKPVKNVDLWQRLDAALGQHQIKWEWVKGHAGHPENERCDELARAAAMNPTLEDTGYQVEV</sequence>
<dbReference type="EC" id="3.1.26.4" evidence="1"/>
<dbReference type="EMBL" id="CP000038">
    <property type="protein sequence ID" value="AAZ87013.1"/>
    <property type="molecule type" value="Genomic_DNA"/>
</dbReference>
<dbReference type="RefSeq" id="WP_000917883.1">
    <property type="nucleotide sequence ID" value="NC_007384.1"/>
</dbReference>
<dbReference type="SMR" id="Q3Z5E9"/>
<dbReference type="GeneID" id="93777209"/>
<dbReference type="KEGG" id="ssn:SSON_0228"/>
<dbReference type="HOGENOM" id="CLU_030894_6_0_6"/>
<dbReference type="Proteomes" id="UP000002529">
    <property type="component" value="Chromosome"/>
</dbReference>
<dbReference type="GO" id="GO:0005737">
    <property type="term" value="C:cytoplasm"/>
    <property type="evidence" value="ECO:0007669"/>
    <property type="project" value="UniProtKB-SubCell"/>
</dbReference>
<dbReference type="GO" id="GO:0000287">
    <property type="term" value="F:magnesium ion binding"/>
    <property type="evidence" value="ECO:0007669"/>
    <property type="project" value="UniProtKB-UniRule"/>
</dbReference>
<dbReference type="GO" id="GO:0003676">
    <property type="term" value="F:nucleic acid binding"/>
    <property type="evidence" value="ECO:0007669"/>
    <property type="project" value="InterPro"/>
</dbReference>
<dbReference type="GO" id="GO:0004523">
    <property type="term" value="F:RNA-DNA hybrid ribonuclease activity"/>
    <property type="evidence" value="ECO:0007669"/>
    <property type="project" value="UniProtKB-UniRule"/>
</dbReference>
<dbReference type="GO" id="GO:0043137">
    <property type="term" value="P:DNA replication, removal of RNA primer"/>
    <property type="evidence" value="ECO:0007669"/>
    <property type="project" value="TreeGrafter"/>
</dbReference>
<dbReference type="CDD" id="cd09278">
    <property type="entry name" value="RNase_HI_prokaryote_like"/>
    <property type="match status" value="1"/>
</dbReference>
<dbReference type="FunFam" id="3.30.420.10:FF:000008">
    <property type="entry name" value="Ribonuclease H"/>
    <property type="match status" value="1"/>
</dbReference>
<dbReference type="Gene3D" id="3.30.420.10">
    <property type="entry name" value="Ribonuclease H-like superfamily/Ribonuclease H"/>
    <property type="match status" value="1"/>
</dbReference>
<dbReference type="HAMAP" id="MF_00042">
    <property type="entry name" value="RNase_H"/>
    <property type="match status" value="1"/>
</dbReference>
<dbReference type="InterPro" id="IPR050092">
    <property type="entry name" value="RNase_H"/>
</dbReference>
<dbReference type="InterPro" id="IPR012337">
    <property type="entry name" value="RNaseH-like_sf"/>
</dbReference>
<dbReference type="InterPro" id="IPR002156">
    <property type="entry name" value="RNaseH_domain"/>
</dbReference>
<dbReference type="InterPro" id="IPR036397">
    <property type="entry name" value="RNaseH_sf"/>
</dbReference>
<dbReference type="InterPro" id="IPR022892">
    <property type="entry name" value="RNaseHI"/>
</dbReference>
<dbReference type="NCBIfam" id="NF001236">
    <property type="entry name" value="PRK00203.1"/>
    <property type="match status" value="1"/>
</dbReference>
<dbReference type="PANTHER" id="PTHR10642">
    <property type="entry name" value="RIBONUCLEASE H1"/>
    <property type="match status" value="1"/>
</dbReference>
<dbReference type="PANTHER" id="PTHR10642:SF26">
    <property type="entry name" value="RIBONUCLEASE H1"/>
    <property type="match status" value="1"/>
</dbReference>
<dbReference type="Pfam" id="PF00075">
    <property type="entry name" value="RNase_H"/>
    <property type="match status" value="1"/>
</dbReference>
<dbReference type="SUPFAM" id="SSF53098">
    <property type="entry name" value="Ribonuclease H-like"/>
    <property type="match status" value="1"/>
</dbReference>
<dbReference type="PROSITE" id="PS50879">
    <property type="entry name" value="RNASE_H_1"/>
    <property type="match status" value="1"/>
</dbReference>
<proteinExistence type="inferred from homology"/>
<name>RNH_SHISS</name>
<organism>
    <name type="scientific">Shigella sonnei (strain Ss046)</name>
    <dbReference type="NCBI Taxonomy" id="300269"/>
    <lineage>
        <taxon>Bacteria</taxon>
        <taxon>Pseudomonadati</taxon>
        <taxon>Pseudomonadota</taxon>
        <taxon>Gammaproteobacteria</taxon>
        <taxon>Enterobacterales</taxon>
        <taxon>Enterobacteriaceae</taxon>
        <taxon>Shigella</taxon>
    </lineage>
</organism>
<gene>
    <name evidence="1" type="primary">rnhA</name>
    <name type="ordered locus">SSON_0228</name>
</gene>
<feature type="chain" id="PRO_1000074679" description="Ribonuclease H">
    <location>
        <begin position="1"/>
        <end position="155"/>
    </location>
</feature>
<feature type="domain" description="RNase H type-1" evidence="2">
    <location>
        <begin position="1"/>
        <end position="142"/>
    </location>
</feature>
<feature type="binding site" evidence="1">
    <location>
        <position position="10"/>
    </location>
    <ligand>
        <name>Mg(2+)</name>
        <dbReference type="ChEBI" id="CHEBI:18420"/>
        <label>1</label>
    </ligand>
</feature>
<feature type="binding site" evidence="1">
    <location>
        <position position="10"/>
    </location>
    <ligand>
        <name>Mg(2+)</name>
        <dbReference type="ChEBI" id="CHEBI:18420"/>
        <label>2</label>
    </ligand>
</feature>
<feature type="binding site" evidence="1">
    <location>
        <position position="48"/>
    </location>
    <ligand>
        <name>Mg(2+)</name>
        <dbReference type="ChEBI" id="CHEBI:18420"/>
        <label>1</label>
    </ligand>
</feature>
<feature type="binding site" evidence="1">
    <location>
        <position position="70"/>
    </location>
    <ligand>
        <name>Mg(2+)</name>
        <dbReference type="ChEBI" id="CHEBI:18420"/>
        <label>1</label>
    </ligand>
</feature>
<feature type="binding site" evidence="1">
    <location>
        <position position="134"/>
    </location>
    <ligand>
        <name>Mg(2+)</name>
        <dbReference type="ChEBI" id="CHEBI:18420"/>
        <label>2</label>
    </ligand>
</feature>
<protein>
    <recommendedName>
        <fullName evidence="1">Ribonuclease H</fullName>
        <shortName evidence="1">RNase H</shortName>
        <ecNumber evidence="1">3.1.26.4</ecNumber>
    </recommendedName>
</protein>
<keyword id="KW-0963">Cytoplasm</keyword>
<keyword id="KW-0255">Endonuclease</keyword>
<keyword id="KW-0378">Hydrolase</keyword>
<keyword id="KW-0460">Magnesium</keyword>
<keyword id="KW-0479">Metal-binding</keyword>
<keyword id="KW-0540">Nuclease</keyword>
<keyword id="KW-1185">Reference proteome</keyword>
<accession>Q3Z5E9</accession>
<evidence type="ECO:0000255" key="1">
    <source>
        <dbReference type="HAMAP-Rule" id="MF_00042"/>
    </source>
</evidence>
<evidence type="ECO:0000255" key="2">
    <source>
        <dbReference type="PROSITE-ProRule" id="PRU00408"/>
    </source>
</evidence>